<evidence type="ECO:0000250" key="1">
    <source>
        <dbReference type="UniProtKB" id="Q64FJ6"/>
    </source>
</evidence>
<evidence type="ECO:0000250" key="2">
    <source>
        <dbReference type="UniProtKB" id="Q9FI78"/>
    </source>
</evidence>
<evidence type="ECO:0000269" key="3">
    <source>
    </source>
</evidence>
<evidence type="ECO:0000303" key="4">
    <source>
    </source>
</evidence>
<evidence type="ECO:0000305" key="5"/>
<evidence type="ECO:0000305" key="6">
    <source>
    </source>
</evidence>
<evidence type="ECO:0000312" key="7">
    <source>
        <dbReference type="EMBL" id="RXI05625.1"/>
    </source>
</evidence>
<comment type="function">
    <text evidence="1">Involved in the biosynthesis of volatile esters which confer ripe apple fruit flavor (By similarity). Alcohol acyl transferase that can use a wide range of alcohols as substrate to produce esters (By similarity).</text>
</comment>
<comment type="tissue specificity">
    <text evidence="3">Expressed at very low levels in the cortex and skin of ripe fruit.</text>
</comment>
<comment type="developmental stage">
    <text evidence="3">Accumulates progressively at very low levels during fruit development, and fades out in ripe fruit.</text>
</comment>
<comment type="miscellaneous">
    <text evidence="6">The fruit of cv. Royal Gala exhibits a high ester accumulation, whereas the cv. Granny Smith contains low ester levels; this influences strongly the ripe apple fruit aroma.</text>
</comment>
<comment type="similarity">
    <text evidence="5">Belongs to the plant acyltransferase family.</text>
</comment>
<gene>
    <name evidence="4" type="primary">AAT1GSD</name>
    <name evidence="7" type="ORF">DVH24_017667</name>
</gene>
<dbReference type="EC" id="2.3.1.-" evidence="1"/>
<dbReference type="EMBL" id="KC291135">
    <property type="protein sequence ID" value="AGW30205.1"/>
    <property type="molecule type" value="Genomic_DNA"/>
</dbReference>
<dbReference type="EMBL" id="RDQH01000328">
    <property type="protein sequence ID" value="RXI05625.1"/>
    <property type="molecule type" value="Genomic_DNA"/>
</dbReference>
<dbReference type="SMR" id="A0A498KIQ3"/>
<dbReference type="STRING" id="3750.A0A498KIQ3"/>
<dbReference type="Proteomes" id="UP000290289">
    <property type="component" value="Chromosome 2"/>
</dbReference>
<dbReference type="GO" id="GO:0016746">
    <property type="term" value="F:acyltransferase activity"/>
    <property type="evidence" value="ECO:0000250"/>
    <property type="project" value="UniProtKB"/>
</dbReference>
<dbReference type="GO" id="GO:0006066">
    <property type="term" value="P:alcohol metabolic process"/>
    <property type="evidence" value="ECO:0000250"/>
    <property type="project" value="UniProtKB"/>
</dbReference>
<dbReference type="GO" id="GO:0009836">
    <property type="term" value="P:fruit ripening, climacteric"/>
    <property type="evidence" value="ECO:0000270"/>
    <property type="project" value="UniProtKB"/>
</dbReference>
<dbReference type="Gene3D" id="3.30.559.10">
    <property type="entry name" value="Chloramphenicol acetyltransferase-like domain"/>
    <property type="match status" value="2"/>
</dbReference>
<dbReference type="InterPro" id="IPR023213">
    <property type="entry name" value="CAT-like_dom_sf"/>
</dbReference>
<dbReference type="InterPro" id="IPR050898">
    <property type="entry name" value="Plant_acyltransferase"/>
</dbReference>
<dbReference type="PANTHER" id="PTHR31147">
    <property type="entry name" value="ACYL TRANSFERASE 4"/>
    <property type="match status" value="1"/>
</dbReference>
<dbReference type="PANTHER" id="PTHR31147:SF66">
    <property type="entry name" value="OS05G0315700 PROTEIN"/>
    <property type="match status" value="1"/>
</dbReference>
<dbReference type="Pfam" id="PF02458">
    <property type="entry name" value="Transferase"/>
    <property type="match status" value="1"/>
</dbReference>
<reference key="1">
    <citation type="journal article" date="2014" name="Plant J.">
        <title>The AAT1 locus is critical for the biosynthesis of esters contributing to 'ripe apple' flavour in 'Royal Gala' and 'Granny Smith' apples.</title>
        <authorList>
            <person name="Souleyre E.J.F."/>
            <person name="Chagne D."/>
            <person name="Chen X."/>
            <person name="Tomes S."/>
            <person name="Turner R.M."/>
            <person name="Wang M.Y."/>
            <person name="Maddumage R."/>
            <person name="Hunt M.B."/>
            <person name="Winz R.A."/>
            <person name="Wiedow C."/>
            <person name="Hamiaux C."/>
            <person name="Gardiner S.E."/>
            <person name="Rowan D.D."/>
            <person name="Atkinson R.G."/>
        </authorList>
    </citation>
    <scope>NUCLEOTIDE SEQUENCE [GENOMIC DNA]</scope>
    <scope>TISSUE SPECIFICITY</scope>
    <scope>DEVELOPMENTAL STAGE</scope>
    <scope>GENE FAMILY</scope>
    <scope>NOMENCLATURE</scope>
    <source>
        <strain>cv. Granny Smith</strain>
    </source>
</reference>
<reference key="2">
    <citation type="journal article" date="2019" name="Nat. Commun.">
        <title>A high-quality apple genome assembly reveals the association of a retrotransposon and red fruit colour.</title>
        <authorList>
            <person name="Zhang L."/>
            <person name="Hu J."/>
            <person name="Han X."/>
            <person name="Li J."/>
            <person name="Gao Y."/>
            <person name="Richards C.M."/>
            <person name="Zhang C."/>
            <person name="Tian Y."/>
            <person name="Liu G."/>
            <person name="Gul H."/>
            <person name="Wang D."/>
            <person name="Tian Y."/>
            <person name="Yang C."/>
            <person name="Meng M."/>
            <person name="Yuan G."/>
            <person name="Kang G."/>
            <person name="Wu Y."/>
            <person name="Wang K."/>
            <person name="Zhang H."/>
            <person name="Wang D."/>
            <person name="Cong P."/>
        </authorList>
    </citation>
    <scope>NUCLEOTIDE SEQUENCE [LARGE SCALE GENOMIC DNA]</scope>
    <source>
        <strain>cv. HFTH1</strain>
        <tissue>Leaf</tissue>
    </source>
</reference>
<keyword id="KW-1185">Reference proteome</keyword>
<keyword id="KW-0808">Transferase</keyword>
<feature type="chain" id="PRO_0000451714" description="Alcohol acyl transferase 1 allele GSd">
    <location>
        <begin position="1"/>
        <end position="459"/>
    </location>
</feature>
<feature type="active site" description="Proton acceptor" evidence="2">
    <location>
        <position position="164"/>
    </location>
</feature>
<feature type="active site" description="Proton acceptor" evidence="2">
    <location>
        <position position="385"/>
    </location>
</feature>
<feature type="sequence variant" description="In strain: cv. Granny Smith." evidence="5">
    <original>RIMSMM</original>
    <variation>SQ</variation>
    <location>
        <begin position="454"/>
        <end position="459"/>
    </location>
</feature>
<sequence length="459" mass="51235">MMLPSVLQVKRLQPELITPAKPTPQETKFLSEIDDQESLRFQVPVIMCYKANPSLNKNRNPVKVIREALSRALVYYYPLAGRLREGPNKKLVVDCNGEGILFVEASADVTLEQLGDKILPPCPLLEEFLFNFPGSGGIIGCPLLLVQVTCLTCGGFILALRLNHTMCDASGLLLFLTAIAEMARGAHAPSILPVWERELLFARNPPRITCAHHEYEDVIDHSDGSYAFSNQSNMVQRSFYFGAKEMRVLRKQIPPHLISTCSTFDLITACLWKCRTLALKINPKQAVRVSCIVNARGKHHNVRLPLGYYGNAFAYPAAVSKAEPLCKNPLGYALELVKKAKATMNEEYLRSVADLMVLRGRPQYSTTGCYLIVSDNTRAGFGDVNFGWGEPVFAGPAKALDLISFYVQHKNNTEDGILVPMCLSSSAMERFQQELERITQEPKEDICNNLRSTRIMSMM</sequence>
<accession>A0A498KIQ3</accession>
<accession>V9P9R1</accession>
<name>ATGSD_MALDO</name>
<protein>
    <recommendedName>
        <fullName evidence="4">Alcohol acyl transferase 1 allele GSd</fullName>
        <shortName evidence="4">AAT1-GSd</shortName>
        <ecNumber evidence="1">2.3.1.-</ecNumber>
    </recommendedName>
</protein>
<organism>
    <name type="scientific">Malus domestica</name>
    <name type="common">Apple</name>
    <name type="synonym">Pyrus malus</name>
    <dbReference type="NCBI Taxonomy" id="3750"/>
    <lineage>
        <taxon>Eukaryota</taxon>
        <taxon>Viridiplantae</taxon>
        <taxon>Streptophyta</taxon>
        <taxon>Embryophyta</taxon>
        <taxon>Tracheophyta</taxon>
        <taxon>Spermatophyta</taxon>
        <taxon>Magnoliopsida</taxon>
        <taxon>eudicotyledons</taxon>
        <taxon>Gunneridae</taxon>
        <taxon>Pentapetalae</taxon>
        <taxon>rosids</taxon>
        <taxon>fabids</taxon>
        <taxon>Rosales</taxon>
        <taxon>Rosaceae</taxon>
        <taxon>Amygdaloideae</taxon>
        <taxon>Maleae</taxon>
        <taxon>Malus</taxon>
    </lineage>
</organism>
<proteinExistence type="evidence at transcript level"/>